<reference key="1">
    <citation type="journal article" date="1993" name="J. Bacteriol.">
        <title>Organization and nucleotide sequences of the genes encoding the biotin carboxyl carrier protein and biotin carboxylase protein of Pseudomonas aeruginosa acetyl coenzyme A carboxylase.</title>
        <authorList>
            <person name="Best E.A."/>
            <person name="Knauf V.C."/>
        </authorList>
    </citation>
    <scope>NUCLEOTIDE SEQUENCE [GENOMIC DNA]</scope>
    <source>
        <strain>ATCC 15692 / DSM 22644 / CIP 104116 / JCM 14847 / LMG 12228 / 1C / PRS 101 / PAO1</strain>
    </source>
</reference>
<reference key="2">
    <citation type="journal article" date="2000" name="Nature">
        <title>Complete genome sequence of Pseudomonas aeruginosa PAO1, an opportunistic pathogen.</title>
        <authorList>
            <person name="Stover C.K."/>
            <person name="Pham X.-Q.T."/>
            <person name="Erwin A.L."/>
            <person name="Mizoguchi S.D."/>
            <person name="Warrener P."/>
            <person name="Hickey M.J."/>
            <person name="Brinkman F.S.L."/>
            <person name="Hufnagle W.O."/>
            <person name="Kowalik D.J."/>
            <person name="Lagrou M."/>
            <person name="Garber R.L."/>
            <person name="Goltry L."/>
            <person name="Tolentino E."/>
            <person name="Westbrock-Wadman S."/>
            <person name="Yuan Y."/>
            <person name="Brody L.L."/>
            <person name="Coulter S.N."/>
            <person name="Folger K.R."/>
            <person name="Kas A."/>
            <person name="Larbig K."/>
            <person name="Lim R.M."/>
            <person name="Smith K.A."/>
            <person name="Spencer D.H."/>
            <person name="Wong G.K.-S."/>
            <person name="Wu Z."/>
            <person name="Paulsen I.T."/>
            <person name="Reizer J."/>
            <person name="Saier M.H. Jr."/>
            <person name="Hancock R.E.W."/>
            <person name="Lory S."/>
            <person name="Olson M.V."/>
        </authorList>
    </citation>
    <scope>NUCLEOTIDE SEQUENCE [LARGE SCALE GENOMIC DNA]</scope>
    <source>
        <strain>ATCC 15692 / DSM 22644 / CIP 104116 / JCM 14847 / LMG 12228 / 1C / PRS 101 / PAO1</strain>
    </source>
</reference>
<evidence type="ECO:0000250" key="1">
    <source>
        <dbReference type="UniProtKB" id="P24182"/>
    </source>
</evidence>
<evidence type="ECO:0000255" key="2">
    <source>
        <dbReference type="PROSITE-ProRule" id="PRU00409"/>
    </source>
</evidence>
<evidence type="ECO:0000305" key="3"/>
<evidence type="ECO:0007829" key="4">
    <source>
        <dbReference type="PDB" id="2C00"/>
    </source>
</evidence>
<evidence type="ECO:0007829" key="5">
    <source>
        <dbReference type="PDB" id="2VQD"/>
    </source>
</evidence>
<organism>
    <name type="scientific">Pseudomonas aeruginosa (strain ATCC 15692 / DSM 22644 / CIP 104116 / JCM 14847 / LMG 12228 / 1C / PRS 101 / PAO1)</name>
    <dbReference type="NCBI Taxonomy" id="208964"/>
    <lineage>
        <taxon>Bacteria</taxon>
        <taxon>Pseudomonadati</taxon>
        <taxon>Pseudomonadota</taxon>
        <taxon>Gammaproteobacteria</taxon>
        <taxon>Pseudomonadales</taxon>
        <taxon>Pseudomonadaceae</taxon>
        <taxon>Pseudomonas</taxon>
    </lineage>
</organism>
<dbReference type="EC" id="6.3.4.14" evidence="1"/>
<dbReference type="EMBL" id="L14612">
    <property type="protein sequence ID" value="AAA16041.1"/>
    <property type="molecule type" value="Unassigned_DNA"/>
</dbReference>
<dbReference type="EMBL" id="AE004091">
    <property type="protein sequence ID" value="AAG08233.1"/>
    <property type="molecule type" value="Genomic_DNA"/>
</dbReference>
<dbReference type="PIR" id="B49342">
    <property type="entry name" value="B49342"/>
</dbReference>
<dbReference type="RefSeq" id="NP_253535.1">
    <property type="nucleotide sequence ID" value="NC_002516.2"/>
</dbReference>
<dbReference type="RefSeq" id="WP_003095391.1">
    <property type="nucleotide sequence ID" value="NZ_QZGE01000002.1"/>
</dbReference>
<dbReference type="PDB" id="2C00">
    <property type="method" value="X-ray"/>
    <property type="resolution" value="2.50 A"/>
    <property type="chains" value="A/B=1-449"/>
</dbReference>
<dbReference type="PDB" id="2VQD">
    <property type="method" value="X-ray"/>
    <property type="resolution" value="2.41 A"/>
    <property type="chains" value="A=1-449"/>
</dbReference>
<dbReference type="PDBsum" id="2C00"/>
<dbReference type="PDBsum" id="2VQD"/>
<dbReference type="SMR" id="P37798"/>
<dbReference type="FunCoup" id="P37798">
    <property type="interactions" value="777"/>
</dbReference>
<dbReference type="STRING" id="208964.PA4848"/>
<dbReference type="BindingDB" id="P37798"/>
<dbReference type="ChEMBL" id="CHEMBL4523221"/>
<dbReference type="PaxDb" id="208964-PA4848"/>
<dbReference type="GeneID" id="77223396"/>
<dbReference type="GeneID" id="879558"/>
<dbReference type="KEGG" id="pae:PA4848"/>
<dbReference type="PATRIC" id="fig|208964.12.peg.5080"/>
<dbReference type="PseudoCAP" id="PA4848"/>
<dbReference type="HOGENOM" id="CLU_000395_3_2_6"/>
<dbReference type="InParanoid" id="P37798"/>
<dbReference type="OrthoDB" id="9763189at2"/>
<dbReference type="PhylomeDB" id="P37798"/>
<dbReference type="BioCyc" id="PAER208964:G1FZ6-4962-MONOMER"/>
<dbReference type="UniPathway" id="UPA00655">
    <property type="reaction ID" value="UER00711"/>
</dbReference>
<dbReference type="EvolutionaryTrace" id="P37798"/>
<dbReference type="Proteomes" id="UP000002438">
    <property type="component" value="Chromosome"/>
</dbReference>
<dbReference type="GO" id="GO:0003989">
    <property type="term" value="F:acetyl-CoA carboxylase activity"/>
    <property type="evidence" value="ECO:0007669"/>
    <property type="project" value="UniProtKB-EC"/>
</dbReference>
<dbReference type="GO" id="GO:0005524">
    <property type="term" value="F:ATP binding"/>
    <property type="evidence" value="ECO:0007669"/>
    <property type="project" value="UniProtKB-KW"/>
</dbReference>
<dbReference type="GO" id="GO:0004075">
    <property type="term" value="F:biotin carboxylase activity"/>
    <property type="evidence" value="ECO:0007669"/>
    <property type="project" value="UniProtKB-EC"/>
</dbReference>
<dbReference type="GO" id="GO:0046872">
    <property type="term" value="F:metal ion binding"/>
    <property type="evidence" value="ECO:0007669"/>
    <property type="project" value="UniProtKB-KW"/>
</dbReference>
<dbReference type="GO" id="GO:0006633">
    <property type="term" value="P:fatty acid biosynthetic process"/>
    <property type="evidence" value="ECO:0007669"/>
    <property type="project" value="UniProtKB-KW"/>
</dbReference>
<dbReference type="GO" id="GO:2001295">
    <property type="term" value="P:malonyl-CoA biosynthetic process"/>
    <property type="evidence" value="ECO:0007669"/>
    <property type="project" value="UniProtKB-UniPathway"/>
</dbReference>
<dbReference type="FunFam" id="3.30.1490.20:FF:000018">
    <property type="entry name" value="Biotin carboxylase"/>
    <property type="match status" value="1"/>
</dbReference>
<dbReference type="FunFam" id="3.40.50.20:FF:000010">
    <property type="entry name" value="Propionyl-CoA carboxylase subunit alpha"/>
    <property type="match status" value="1"/>
</dbReference>
<dbReference type="Gene3D" id="3.40.50.20">
    <property type="match status" value="1"/>
</dbReference>
<dbReference type="Gene3D" id="3.30.1490.20">
    <property type="entry name" value="ATP-grasp fold, A domain"/>
    <property type="match status" value="1"/>
</dbReference>
<dbReference type="Gene3D" id="3.30.470.20">
    <property type="entry name" value="ATP-grasp fold, B domain"/>
    <property type="match status" value="1"/>
</dbReference>
<dbReference type="InterPro" id="IPR051602">
    <property type="entry name" value="ACC_Biotin_Carboxylase"/>
</dbReference>
<dbReference type="InterPro" id="IPR004549">
    <property type="entry name" value="Acetyl_CoA_COase_biotin_COase"/>
</dbReference>
<dbReference type="InterPro" id="IPR011761">
    <property type="entry name" value="ATP-grasp"/>
</dbReference>
<dbReference type="InterPro" id="IPR013815">
    <property type="entry name" value="ATP_grasp_subdomain_1"/>
</dbReference>
<dbReference type="InterPro" id="IPR005481">
    <property type="entry name" value="BC-like_N"/>
</dbReference>
<dbReference type="InterPro" id="IPR011764">
    <property type="entry name" value="Biotin_carboxylation_dom"/>
</dbReference>
<dbReference type="InterPro" id="IPR005482">
    <property type="entry name" value="Biotin_COase_C"/>
</dbReference>
<dbReference type="InterPro" id="IPR005479">
    <property type="entry name" value="CbamoylP_synth_lsu-like_ATP-bd"/>
</dbReference>
<dbReference type="InterPro" id="IPR016185">
    <property type="entry name" value="PreATP-grasp_dom_sf"/>
</dbReference>
<dbReference type="InterPro" id="IPR011054">
    <property type="entry name" value="Rudment_hybrid_motif"/>
</dbReference>
<dbReference type="NCBIfam" id="TIGR00514">
    <property type="entry name" value="accC"/>
    <property type="match status" value="1"/>
</dbReference>
<dbReference type="NCBIfam" id="NF006367">
    <property type="entry name" value="PRK08591.1"/>
    <property type="match status" value="1"/>
</dbReference>
<dbReference type="PANTHER" id="PTHR48095:SF2">
    <property type="entry name" value="BIOTIN CARBOXYLASE, CHLOROPLASTIC"/>
    <property type="match status" value="1"/>
</dbReference>
<dbReference type="PANTHER" id="PTHR48095">
    <property type="entry name" value="PYRUVATE CARBOXYLASE SUBUNIT A"/>
    <property type="match status" value="1"/>
</dbReference>
<dbReference type="Pfam" id="PF02785">
    <property type="entry name" value="Biotin_carb_C"/>
    <property type="match status" value="1"/>
</dbReference>
<dbReference type="Pfam" id="PF00289">
    <property type="entry name" value="Biotin_carb_N"/>
    <property type="match status" value="1"/>
</dbReference>
<dbReference type="Pfam" id="PF02786">
    <property type="entry name" value="CPSase_L_D2"/>
    <property type="match status" value="1"/>
</dbReference>
<dbReference type="SMART" id="SM00878">
    <property type="entry name" value="Biotin_carb_C"/>
    <property type="match status" value="1"/>
</dbReference>
<dbReference type="SMART" id="SM01209">
    <property type="entry name" value="GARS_A"/>
    <property type="match status" value="1"/>
</dbReference>
<dbReference type="SUPFAM" id="SSF56059">
    <property type="entry name" value="Glutathione synthetase ATP-binding domain-like"/>
    <property type="match status" value="1"/>
</dbReference>
<dbReference type="SUPFAM" id="SSF52440">
    <property type="entry name" value="PreATP-grasp domain"/>
    <property type="match status" value="1"/>
</dbReference>
<dbReference type="SUPFAM" id="SSF51246">
    <property type="entry name" value="Rudiment single hybrid motif"/>
    <property type="match status" value="1"/>
</dbReference>
<dbReference type="PROSITE" id="PS50975">
    <property type="entry name" value="ATP_GRASP"/>
    <property type="match status" value="1"/>
</dbReference>
<dbReference type="PROSITE" id="PS50979">
    <property type="entry name" value="BC"/>
    <property type="match status" value="1"/>
</dbReference>
<dbReference type="PROSITE" id="PS00866">
    <property type="entry name" value="CPSASE_1"/>
    <property type="match status" value="1"/>
</dbReference>
<dbReference type="PROSITE" id="PS00867">
    <property type="entry name" value="CPSASE_2"/>
    <property type="match status" value="1"/>
</dbReference>
<keyword id="KW-0002">3D-structure</keyword>
<keyword id="KW-0067">ATP-binding</keyword>
<keyword id="KW-0092">Biotin</keyword>
<keyword id="KW-0275">Fatty acid biosynthesis</keyword>
<keyword id="KW-0276">Fatty acid metabolism</keyword>
<keyword id="KW-0436">Ligase</keyword>
<keyword id="KW-0444">Lipid biosynthesis</keyword>
<keyword id="KW-0443">Lipid metabolism</keyword>
<keyword id="KW-0460">Magnesium</keyword>
<keyword id="KW-0464">Manganese</keyword>
<keyword id="KW-0479">Metal-binding</keyword>
<keyword id="KW-0547">Nucleotide-binding</keyword>
<keyword id="KW-1185">Reference proteome</keyword>
<feature type="chain" id="PRO_0000146794" description="Biotin carboxylase">
    <location>
        <begin position="1"/>
        <end position="449"/>
    </location>
</feature>
<feature type="domain" description="Biotin carboxylation">
    <location>
        <begin position="1"/>
        <end position="445"/>
    </location>
</feature>
<feature type="domain" description="ATP-grasp" evidence="2">
    <location>
        <begin position="120"/>
        <end position="317"/>
    </location>
</feature>
<feature type="active site" evidence="1">
    <location>
        <position position="292"/>
    </location>
</feature>
<feature type="binding site" evidence="1">
    <location>
        <position position="116"/>
    </location>
    <ligand>
        <name>ATP</name>
        <dbReference type="ChEBI" id="CHEBI:30616"/>
    </ligand>
</feature>
<feature type="binding site" evidence="1">
    <location>
        <position position="159"/>
    </location>
    <ligand>
        <name>ATP</name>
        <dbReference type="ChEBI" id="CHEBI:30616"/>
    </ligand>
</feature>
<feature type="binding site" evidence="1">
    <location>
        <begin position="165"/>
        <end position="166"/>
    </location>
    <ligand>
        <name>ATP</name>
        <dbReference type="ChEBI" id="CHEBI:30616"/>
    </ligand>
</feature>
<feature type="binding site" evidence="1">
    <location>
        <begin position="201"/>
        <end position="204"/>
    </location>
    <ligand>
        <name>ATP</name>
        <dbReference type="ChEBI" id="CHEBI:30616"/>
    </ligand>
</feature>
<feature type="binding site" evidence="1">
    <location>
        <position position="209"/>
    </location>
    <ligand>
        <name>ATP</name>
        <dbReference type="ChEBI" id="CHEBI:30616"/>
    </ligand>
</feature>
<feature type="binding site" evidence="1">
    <location>
        <position position="236"/>
    </location>
    <ligand>
        <name>ATP</name>
        <dbReference type="ChEBI" id="CHEBI:30616"/>
    </ligand>
</feature>
<feature type="binding site" evidence="1">
    <location>
        <position position="238"/>
    </location>
    <ligand>
        <name>hydrogencarbonate</name>
        <dbReference type="ChEBI" id="CHEBI:17544"/>
    </ligand>
</feature>
<feature type="binding site" evidence="1">
    <location>
        <position position="276"/>
    </location>
    <ligand>
        <name>ATP</name>
        <dbReference type="ChEBI" id="CHEBI:30616"/>
    </ligand>
</feature>
<feature type="binding site" evidence="2">
    <location>
        <position position="276"/>
    </location>
    <ligand>
        <name>Mg(2+)</name>
        <dbReference type="ChEBI" id="CHEBI:18420"/>
        <label>1</label>
    </ligand>
</feature>
<feature type="binding site" evidence="2">
    <location>
        <position position="276"/>
    </location>
    <ligand>
        <name>Mn(2+)</name>
        <dbReference type="ChEBI" id="CHEBI:29035"/>
        <label>1</label>
    </ligand>
</feature>
<feature type="binding site" evidence="1">
    <location>
        <position position="288"/>
    </location>
    <ligand>
        <name>ATP</name>
        <dbReference type="ChEBI" id="CHEBI:30616"/>
    </ligand>
</feature>
<feature type="binding site" evidence="2">
    <location>
        <position position="288"/>
    </location>
    <ligand>
        <name>Mg(2+)</name>
        <dbReference type="ChEBI" id="CHEBI:18420"/>
        <label>1</label>
    </ligand>
</feature>
<feature type="binding site" evidence="2">
    <location>
        <position position="288"/>
    </location>
    <ligand>
        <name>Mg(2+)</name>
        <dbReference type="ChEBI" id="CHEBI:18420"/>
        <label>2</label>
    </ligand>
</feature>
<feature type="binding site" evidence="2">
    <location>
        <position position="288"/>
    </location>
    <ligand>
        <name>Mn(2+)</name>
        <dbReference type="ChEBI" id="CHEBI:29035"/>
        <label>1</label>
    </ligand>
</feature>
<feature type="binding site" evidence="2">
    <location>
        <position position="288"/>
    </location>
    <ligand>
        <name>Mn(2+)</name>
        <dbReference type="ChEBI" id="CHEBI:29035"/>
        <label>2</label>
    </ligand>
</feature>
<feature type="binding site" evidence="2">
    <location>
        <position position="290"/>
    </location>
    <ligand>
        <name>Mg(2+)</name>
        <dbReference type="ChEBI" id="CHEBI:18420"/>
        <label>2</label>
    </ligand>
</feature>
<feature type="binding site" evidence="2">
    <location>
        <position position="290"/>
    </location>
    <ligand>
        <name>Mn(2+)</name>
        <dbReference type="ChEBI" id="CHEBI:29035"/>
        <label>2</label>
    </ligand>
</feature>
<feature type="binding site" evidence="1">
    <location>
        <position position="292"/>
    </location>
    <ligand>
        <name>hydrogencarbonate</name>
        <dbReference type="ChEBI" id="CHEBI:17544"/>
    </ligand>
</feature>
<feature type="binding site" evidence="1">
    <location>
        <position position="295"/>
    </location>
    <ligand>
        <name>hydrogencarbonate</name>
        <dbReference type="ChEBI" id="CHEBI:17544"/>
    </ligand>
</feature>
<feature type="binding site" evidence="1">
    <location>
        <position position="338"/>
    </location>
    <ligand>
        <name>biotin</name>
        <dbReference type="ChEBI" id="CHEBI:57586"/>
    </ligand>
</feature>
<feature type="binding site" evidence="1">
    <location>
        <position position="338"/>
    </location>
    <ligand>
        <name>hydrogencarbonate</name>
        <dbReference type="ChEBI" id="CHEBI:17544"/>
    </ligand>
</feature>
<feature type="strand" evidence="5">
    <location>
        <begin position="3"/>
        <end position="7"/>
    </location>
</feature>
<feature type="helix" evidence="5">
    <location>
        <begin position="11"/>
        <end position="23"/>
    </location>
</feature>
<feature type="strand" evidence="5">
    <location>
        <begin position="27"/>
        <end position="33"/>
    </location>
</feature>
<feature type="helix" evidence="5">
    <location>
        <begin position="34"/>
        <end position="36"/>
    </location>
</feature>
<feature type="helix" evidence="5">
    <location>
        <begin position="40"/>
        <end position="44"/>
    </location>
</feature>
<feature type="strand" evidence="5">
    <location>
        <begin position="45"/>
        <end position="52"/>
    </location>
</feature>
<feature type="helix" evidence="5">
    <location>
        <begin position="56"/>
        <end position="58"/>
    </location>
</feature>
<feature type="turn" evidence="5">
    <location>
        <begin position="59"/>
        <end position="61"/>
    </location>
</feature>
<feature type="helix" evidence="5">
    <location>
        <begin position="63"/>
        <end position="73"/>
    </location>
</feature>
<feature type="strand" evidence="5">
    <location>
        <begin position="76"/>
        <end position="79"/>
    </location>
</feature>
<feature type="turn" evidence="5">
    <location>
        <begin position="84"/>
        <end position="87"/>
    </location>
</feature>
<feature type="helix" evidence="5">
    <location>
        <begin position="89"/>
        <end position="97"/>
    </location>
</feature>
<feature type="strand" evidence="5">
    <location>
        <begin position="101"/>
        <end position="105"/>
    </location>
</feature>
<feature type="helix" evidence="5">
    <location>
        <begin position="107"/>
        <end position="114"/>
    </location>
</feature>
<feature type="helix" evidence="5">
    <location>
        <begin position="116"/>
        <end position="125"/>
    </location>
</feature>
<feature type="strand" evidence="4">
    <location>
        <begin position="135"/>
        <end position="137"/>
    </location>
</feature>
<feature type="helix" evidence="5">
    <location>
        <begin position="142"/>
        <end position="152"/>
    </location>
</feature>
<feature type="strand" evidence="5">
    <location>
        <begin position="154"/>
        <end position="160"/>
    </location>
</feature>
<feature type="strand" evidence="5">
    <location>
        <begin position="168"/>
        <end position="174"/>
    </location>
</feature>
<feature type="helix" evidence="5">
    <location>
        <begin position="175"/>
        <end position="177"/>
    </location>
</feature>
<feature type="helix" evidence="5">
    <location>
        <begin position="178"/>
        <end position="193"/>
    </location>
</feature>
<feature type="strand" evidence="5">
    <location>
        <begin position="198"/>
        <end position="202"/>
    </location>
</feature>
<feature type="strand" evidence="5">
    <location>
        <begin position="208"/>
        <end position="220"/>
    </location>
</feature>
<feature type="strand" evidence="5">
    <location>
        <begin position="222"/>
        <end position="229"/>
    </location>
</feature>
<feature type="strand" evidence="5">
    <location>
        <begin position="240"/>
        <end position="244"/>
    </location>
</feature>
<feature type="helix" evidence="5">
    <location>
        <begin position="250"/>
        <end position="267"/>
    </location>
</feature>
<feature type="strand" evidence="5">
    <location>
        <begin position="270"/>
        <end position="280"/>
    </location>
</feature>
<feature type="strand" evidence="5">
    <location>
        <begin position="283"/>
        <end position="290"/>
    </location>
</feature>
<feature type="helix" evidence="5">
    <location>
        <begin position="297"/>
        <end position="304"/>
    </location>
</feature>
<feature type="helix" evidence="5">
    <location>
        <begin position="308"/>
        <end position="316"/>
    </location>
</feature>
<feature type="helix" evidence="5">
    <location>
        <begin position="325"/>
        <end position="327"/>
    </location>
</feature>
<feature type="strand" evidence="5">
    <location>
        <begin position="332"/>
        <end position="342"/>
    </location>
</feature>
<feature type="turn" evidence="5">
    <location>
        <begin position="344"/>
        <end position="346"/>
    </location>
</feature>
<feature type="strand" evidence="5">
    <location>
        <begin position="352"/>
        <end position="358"/>
    </location>
</feature>
<feature type="strand" evidence="5">
    <location>
        <begin position="365"/>
        <end position="369"/>
    </location>
</feature>
<feature type="strand" evidence="5">
    <location>
        <begin position="375"/>
        <end position="377"/>
    </location>
</feature>
<feature type="strand" evidence="5">
    <location>
        <begin position="379"/>
        <end position="381"/>
    </location>
</feature>
<feature type="strand" evidence="5">
    <location>
        <begin position="383"/>
        <end position="394"/>
    </location>
</feature>
<feature type="helix" evidence="5">
    <location>
        <begin position="395"/>
        <end position="408"/>
    </location>
</feature>
<feature type="strand" evidence="5">
    <location>
        <begin position="410"/>
        <end position="412"/>
    </location>
</feature>
<feature type="helix" evidence="5">
    <location>
        <begin position="418"/>
        <end position="424"/>
    </location>
</feature>
<feature type="helix" evidence="5">
    <location>
        <begin position="428"/>
        <end position="432"/>
    </location>
</feature>
<feature type="helix" evidence="5">
    <location>
        <begin position="439"/>
        <end position="444"/>
    </location>
</feature>
<protein>
    <recommendedName>
        <fullName>Biotin carboxylase</fullName>
        <ecNumber evidence="1">6.3.4.14</ecNumber>
    </recommendedName>
    <alternativeName>
        <fullName evidence="3">Acetyl-coenzyme A carboxylase biotin carboxylase subunit A</fullName>
    </alternativeName>
</protein>
<proteinExistence type="evidence at protein level"/>
<name>ACCC_PSEAE</name>
<comment type="function">
    <text evidence="1">This protein is a component of the acetyl coenzyme A carboxylase complex; first, biotin carboxylase catalyzes the carboxylation of the carrier protein and then the transcarboxylase transfers the carboxyl group to form malonyl-CoA.</text>
</comment>
<comment type="catalytic activity">
    <reaction evidence="1">
        <text>N(6)-biotinyl-L-lysyl-[protein] + hydrogencarbonate + ATP = N(6)-carboxybiotinyl-L-lysyl-[protein] + ADP + phosphate + H(+)</text>
        <dbReference type="Rhea" id="RHEA:13501"/>
        <dbReference type="Rhea" id="RHEA-COMP:10505"/>
        <dbReference type="Rhea" id="RHEA-COMP:10506"/>
        <dbReference type="ChEBI" id="CHEBI:15378"/>
        <dbReference type="ChEBI" id="CHEBI:17544"/>
        <dbReference type="ChEBI" id="CHEBI:30616"/>
        <dbReference type="ChEBI" id="CHEBI:43474"/>
        <dbReference type="ChEBI" id="CHEBI:83144"/>
        <dbReference type="ChEBI" id="CHEBI:83145"/>
        <dbReference type="ChEBI" id="CHEBI:456216"/>
        <dbReference type="EC" id="6.3.4.14"/>
    </reaction>
</comment>
<comment type="cofactor">
    <cofactor evidence="2">
        <name>Mg(2+)</name>
        <dbReference type="ChEBI" id="CHEBI:18420"/>
    </cofactor>
    <cofactor evidence="2">
        <name>Mn(2+)</name>
        <dbReference type="ChEBI" id="CHEBI:29035"/>
    </cofactor>
    <text evidence="2">Binds 2 magnesium or manganese ions per subunit.</text>
</comment>
<comment type="pathway">
    <text evidence="1">Lipid metabolism; malonyl-CoA biosynthesis; malonyl-CoA from acetyl-CoA: step 1/1.</text>
</comment>
<comment type="subunit">
    <text evidence="1">Acetyl-CoA carboxylase is a heterohexamer of biotin carboxyl carrier protein, biotin carboxylase and the two subunits of carboxyl transferase in a 2:2 complex.</text>
</comment>
<sequence length="449" mass="48888">MLEKVLIANRGEIALRILRACKELGIKTVAVHSTADRELMHLSLADESVCIGPAPATQSYLQIPAIIAAAEVTGATAIHPGYGFLAENADFAEQIERSGFTFVGPTAEVIRLMGDKVSAKDAMKRAGVPTVPGSDGPLPEDEETALAIAREVGYPVIIKAAGGGGGRGMRVVYDESELIKSAKLTRTEAGAAFGNPMVYLEKFLTNPRHVEVQVLSDGQGNAIHLGDRDCSLQRRHQKVIEEAPAPGIDEKARQEVFARCVQACIEIGYRGAGTFEFLYENGRFYFIEMNTRVQVEHPVSEMVTGVDIVKEMLRIASGEKLSIRQEDVVIRGHALECRINAEDPKTFMPSPGKVKHFHAPGGNGVRVDSHLYSGYSVPPNYDSLVGKVITYGADRDEALARMRNALDELIVDGIKTNTELHKDLVRDAAFCKGGVNIHYLEKKLGMDKH</sequence>
<accession>P37798</accession>
<gene>
    <name type="primary">accC</name>
    <name type="synonym">fabG</name>
    <name type="ordered locus">PA4848</name>
</gene>